<evidence type="ECO:0000255" key="1">
    <source>
        <dbReference type="HAMAP-Rule" id="MF_00074"/>
    </source>
</evidence>
<comment type="function">
    <text evidence="1">Specifically methylates the N7 position of guanine in position 527 of 16S rRNA.</text>
</comment>
<comment type="catalytic activity">
    <reaction evidence="1">
        <text>guanosine(527) in 16S rRNA + S-adenosyl-L-methionine = N(7)-methylguanosine(527) in 16S rRNA + S-adenosyl-L-homocysteine</text>
        <dbReference type="Rhea" id="RHEA:42732"/>
        <dbReference type="Rhea" id="RHEA-COMP:10209"/>
        <dbReference type="Rhea" id="RHEA-COMP:10210"/>
        <dbReference type="ChEBI" id="CHEBI:57856"/>
        <dbReference type="ChEBI" id="CHEBI:59789"/>
        <dbReference type="ChEBI" id="CHEBI:74269"/>
        <dbReference type="ChEBI" id="CHEBI:74480"/>
        <dbReference type="EC" id="2.1.1.170"/>
    </reaction>
</comment>
<comment type="subcellular location">
    <subcellularLocation>
        <location evidence="1">Cytoplasm</location>
    </subcellularLocation>
</comment>
<comment type="similarity">
    <text evidence="1">Belongs to the methyltransferase superfamily. RNA methyltransferase RsmG family.</text>
</comment>
<protein>
    <recommendedName>
        <fullName evidence="1">Ribosomal RNA small subunit methyltransferase G</fullName>
        <ecNumber evidence="1">2.1.1.170</ecNumber>
    </recommendedName>
    <alternativeName>
        <fullName evidence="1">16S rRNA 7-methylguanosine methyltransferase</fullName>
        <shortName evidence="1">16S rRNA m7G methyltransferase</shortName>
    </alternativeName>
</protein>
<sequence length="217" mass="23878">MSMTEQEARAWIEGRVPRGTMAGLEKLVAMILDEMPRQNLIAASTAESIWTRHIVDSAQLVPMVGKGGPLRWIDLGSGAGFPGMVVALMLPELRMTLVESRRKRIDFLRFMAESLGIADRVTVAGQRLEMLESSPHDVISARAFAPLDRLLPLAHRFSHDATLWLLPKGRSAASELEAVTTSWQGDFRVVPSMTDPEAAIIVASQVQPRGKGQKGRR</sequence>
<accession>A5VA84</accession>
<gene>
    <name evidence="1" type="primary">rsmG</name>
    <name type="ordered locus">Swit_2847</name>
</gene>
<organism>
    <name type="scientific">Rhizorhabdus wittichii (strain DSM 6014 / CCUG 31198 / JCM 15750 / NBRC 105917 / EY 4224 / RW1)</name>
    <name type="common">Sphingomonas wittichii</name>
    <dbReference type="NCBI Taxonomy" id="392499"/>
    <lineage>
        <taxon>Bacteria</taxon>
        <taxon>Pseudomonadati</taxon>
        <taxon>Pseudomonadota</taxon>
        <taxon>Alphaproteobacteria</taxon>
        <taxon>Sphingomonadales</taxon>
        <taxon>Sphingomonadaceae</taxon>
        <taxon>Rhizorhabdus</taxon>
    </lineage>
</organism>
<dbReference type="EC" id="2.1.1.170" evidence="1"/>
<dbReference type="EMBL" id="CP000699">
    <property type="protein sequence ID" value="ABQ69200.1"/>
    <property type="molecule type" value="Genomic_DNA"/>
</dbReference>
<dbReference type="SMR" id="A5VA84"/>
<dbReference type="STRING" id="392499.Swit_2847"/>
<dbReference type="PaxDb" id="392499-Swit_2847"/>
<dbReference type="KEGG" id="swi:Swit_2847"/>
<dbReference type="eggNOG" id="COG0357">
    <property type="taxonomic scope" value="Bacteria"/>
</dbReference>
<dbReference type="HOGENOM" id="CLU_065341_1_1_5"/>
<dbReference type="OrthoDB" id="9808773at2"/>
<dbReference type="Proteomes" id="UP000001989">
    <property type="component" value="Chromosome"/>
</dbReference>
<dbReference type="GO" id="GO:0005829">
    <property type="term" value="C:cytosol"/>
    <property type="evidence" value="ECO:0007669"/>
    <property type="project" value="TreeGrafter"/>
</dbReference>
<dbReference type="GO" id="GO:0070043">
    <property type="term" value="F:rRNA (guanine-N7-)-methyltransferase activity"/>
    <property type="evidence" value="ECO:0007669"/>
    <property type="project" value="UniProtKB-UniRule"/>
</dbReference>
<dbReference type="Gene3D" id="3.40.50.150">
    <property type="entry name" value="Vaccinia Virus protein VP39"/>
    <property type="match status" value="1"/>
</dbReference>
<dbReference type="HAMAP" id="MF_00074">
    <property type="entry name" value="16SrRNA_methyltr_G"/>
    <property type="match status" value="1"/>
</dbReference>
<dbReference type="InterPro" id="IPR003682">
    <property type="entry name" value="rRNA_ssu_MeTfrase_G"/>
</dbReference>
<dbReference type="InterPro" id="IPR029063">
    <property type="entry name" value="SAM-dependent_MTases_sf"/>
</dbReference>
<dbReference type="NCBIfam" id="TIGR00138">
    <property type="entry name" value="rsmG_gidB"/>
    <property type="match status" value="1"/>
</dbReference>
<dbReference type="PANTHER" id="PTHR31760">
    <property type="entry name" value="S-ADENOSYL-L-METHIONINE-DEPENDENT METHYLTRANSFERASES SUPERFAMILY PROTEIN"/>
    <property type="match status" value="1"/>
</dbReference>
<dbReference type="PANTHER" id="PTHR31760:SF0">
    <property type="entry name" value="S-ADENOSYL-L-METHIONINE-DEPENDENT METHYLTRANSFERASES SUPERFAMILY PROTEIN"/>
    <property type="match status" value="1"/>
</dbReference>
<dbReference type="Pfam" id="PF02527">
    <property type="entry name" value="GidB"/>
    <property type="match status" value="1"/>
</dbReference>
<dbReference type="SUPFAM" id="SSF53335">
    <property type="entry name" value="S-adenosyl-L-methionine-dependent methyltransferases"/>
    <property type="match status" value="1"/>
</dbReference>
<proteinExistence type="inferred from homology"/>
<keyword id="KW-0963">Cytoplasm</keyword>
<keyword id="KW-0489">Methyltransferase</keyword>
<keyword id="KW-1185">Reference proteome</keyword>
<keyword id="KW-0698">rRNA processing</keyword>
<keyword id="KW-0949">S-adenosyl-L-methionine</keyword>
<keyword id="KW-0808">Transferase</keyword>
<name>RSMG_RHIWR</name>
<feature type="chain" id="PRO_0000335431" description="Ribosomal RNA small subunit methyltransferase G">
    <location>
        <begin position="1"/>
        <end position="217"/>
    </location>
</feature>
<feature type="binding site" evidence="1">
    <location>
        <position position="76"/>
    </location>
    <ligand>
        <name>S-adenosyl-L-methionine</name>
        <dbReference type="ChEBI" id="CHEBI:59789"/>
    </ligand>
</feature>
<feature type="binding site" evidence="1">
    <location>
        <position position="81"/>
    </location>
    <ligand>
        <name>S-adenosyl-L-methionine</name>
        <dbReference type="ChEBI" id="CHEBI:59789"/>
    </ligand>
</feature>
<feature type="binding site" evidence="1">
    <location>
        <begin position="128"/>
        <end position="129"/>
    </location>
    <ligand>
        <name>S-adenosyl-L-methionine</name>
        <dbReference type="ChEBI" id="CHEBI:59789"/>
    </ligand>
</feature>
<feature type="binding site" evidence="1">
    <location>
        <position position="142"/>
    </location>
    <ligand>
        <name>S-adenosyl-L-methionine</name>
        <dbReference type="ChEBI" id="CHEBI:59789"/>
    </ligand>
</feature>
<reference key="1">
    <citation type="journal article" date="2010" name="J. Bacteriol.">
        <title>Genome sequence of the dioxin-mineralizing bacterium Sphingomonas wittichii RW1.</title>
        <authorList>
            <person name="Miller T.R."/>
            <person name="Delcher A.L."/>
            <person name="Salzberg S.L."/>
            <person name="Saunders E."/>
            <person name="Detter J.C."/>
            <person name="Halden R.U."/>
        </authorList>
    </citation>
    <scope>NUCLEOTIDE SEQUENCE [LARGE SCALE GENOMIC DNA]</scope>
    <source>
        <strain>DSM 6014 / CCUG 31198 / JCM 15750 / NBRC 105917 / EY 4224 / RW1</strain>
    </source>
</reference>